<sequence>MDAPERLMPREKMLKSGIGSLTDVELLALFLRTGVPGKDVMALAHETLQRSGSLYGLLSADFAQFRGTGIGIAKYAQLKGIAELARRYYKARMMKENALLSPEMTREFLQSQLTGEEREIFLVIFLDARHRVIKHSRLFSGTLNHVEVHPREIIREAIKLNASAVILAHNHPSGCAEPSKADKLITERVVKCCQFMDIRVLDHLVIGRGEYVSFAERGWI</sequence>
<feature type="chain" id="PRO_1000001649" description="UPF0758 protein CKO_05095">
    <location>
        <begin position="1"/>
        <end position="220"/>
    </location>
</feature>
<feature type="domain" description="MPN" evidence="2">
    <location>
        <begin position="98"/>
        <end position="220"/>
    </location>
</feature>
<feature type="short sequence motif" description="JAMM motif" evidence="2">
    <location>
        <begin position="169"/>
        <end position="182"/>
    </location>
</feature>
<feature type="binding site" evidence="2">
    <location>
        <position position="169"/>
    </location>
    <ligand>
        <name>Zn(2+)</name>
        <dbReference type="ChEBI" id="CHEBI:29105"/>
        <note>catalytic</note>
    </ligand>
</feature>
<feature type="binding site" evidence="2">
    <location>
        <position position="171"/>
    </location>
    <ligand>
        <name>Zn(2+)</name>
        <dbReference type="ChEBI" id="CHEBI:29105"/>
        <note>catalytic</note>
    </ligand>
</feature>
<feature type="binding site" evidence="2">
    <location>
        <position position="182"/>
    </location>
    <ligand>
        <name>Zn(2+)</name>
        <dbReference type="ChEBI" id="CHEBI:29105"/>
        <note>catalytic</note>
    </ligand>
</feature>
<organism>
    <name type="scientific">Citrobacter koseri (strain ATCC BAA-895 / CDC 4225-83 / SGSC4696)</name>
    <dbReference type="NCBI Taxonomy" id="290338"/>
    <lineage>
        <taxon>Bacteria</taxon>
        <taxon>Pseudomonadati</taxon>
        <taxon>Pseudomonadota</taxon>
        <taxon>Gammaproteobacteria</taxon>
        <taxon>Enterobacterales</taxon>
        <taxon>Enterobacteriaceae</taxon>
        <taxon>Citrobacter</taxon>
    </lineage>
</organism>
<comment type="similarity">
    <text evidence="1">Belongs to the UPF0758 family. YicR subfamily.</text>
</comment>
<gene>
    <name type="ordered locus">CKO_05095</name>
</gene>
<proteinExistence type="inferred from homology"/>
<evidence type="ECO:0000255" key="1">
    <source>
        <dbReference type="HAMAP-Rule" id="MF_00018"/>
    </source>
</evidence>
<evidence type="ECO:0000255" key="2">
    <source>
        <dbReference type="PROSITE-ProRule" id="PRU01182"/>
    </source>
</evidence>
<dbReference type="EMBL" id="CP000822">
    <property type="protein sequence ID" value="ABV16138.1"/>
    <property type="molecule type" value="Genomic_DNA"/>
</dbReference>
<dbReference type="SMR" id="A8ARM5"/>
<dbReference type="STRING" id="290338.CKO_05095"/>
<dbReference type="GeneID" id="45138548"/>
<dbReference type="KEGG" id="cko:CKO_05095"/>
<dbReference type="HOGENOM" id="CLU_073529_0_1_6"/>
<dbReference type="OrthoDB" id="9804482at2"/>
<dbReference type="Proteomes" id="UP000008148">
    <property type="component" value="Chromosome"/>
</dbReference>
<dbReference type="GO" id="GO:0046872">
    <property type="term" value="F:metal ion binding"/>
    <property type="evidence" value="ECO:0007669"/>
    <property type="project" value="UniProtKB-KW"/>
</dbReference>
<dbReference type="GO" id="GO:0008237">
    <property type="term" value="F:metallopeptidase activity"/>
    <property type="evidence" value="ECO:0007669"/>
    <property type="project" value="UniProtKB-KW"/>
</dbReference>
<dbReference type="GO" id="GO:0006508">
    <property type="term" value="P:proteolysis"/>
    <property type="evidence" value="ECO:0007669"/>
    <property type="project" value="UniProtKB-KW"/>
</dbReference>
<dbReference type="CDD" id="cd08071">
    <property type="entry name" value="MPN_DUF2466"/>
    <property type="match status" value="1"/>
</dbReference>
<dbReference type="Gene3D" id="3.40.140.10">
    <property type="entry name" value="Cytidine Deaminase, domain 2"/>
    <property type="match status" value="1"/>
</dbReference>
<dbReference type="HAMAP" id="MF_00018">
    <property type="entry name" value="UPF0758_YicR"/>
    <property type="match status" value="1"/>
</dbReference>
<dbReference type="InterPro" id="IPR037518">
    <property type="entry name" value="MPN"/>
</dbReference>
<dbReference type="InterPro" id="IPR025657">
    <property type="entry name" value="RadC_JAB"/>
</dbReference>
<dbReference type="InterPro" id="IPR001405">
    <property type="entry name" value="UPF0758"/>
</dbReference>
<dbReference type="InterPro" id="IPR020891">
    <property type="entry name" value="UPF0758_CS"/>
</dbReference>
<dbReference type="InterPro" id="IPR046778">
    <property type="entry name" value="UPF0758_N"/>
</dbReference>
<dbReference type="InterPro" id="IPR022820">
    <property type="entry name" value="UPF0758_YicR"/>
</dbReference>
<dbReference type="NCBIfam" id="NF000642">
    <property type="entry name" value="PRK00024.1"/>
    <property type="match status" value="1"/>
</dbReference>
<dbReference type="NCBIfam" id="TIGR00608">
    <property type="entry name" value="radc"/>
    <property type="match status" value="1"/>
</dbReference>
<dbReference type="PANTHER" id="PTHR30471">
    <property type="entry name" value="DNA REPAIR PROTEIN RADC"/>
    <property type="match status" value="1"/>
</dbReference>
<dbReference type="PANTHER" id="PTHR30471:SF3">
    <property type="entry name" value="UPF0758 PROTEIN YEES-RELATED"/>
    <property type="match status" value="1"/>
</dbReference>
<dbReference type="Pfam" id="PF04002">
    <property type="entry name" value="RadC"/>
    <property type="match status" value="1"/>
</dbReference>
<dbReference type="Pfam" id="PF20582">
    <property type="entry name" value="UPF0758_N"/>
    <property type="match status" value="1"/>
</dbReference>
<dbReference type="PROSITE" id="PS50249">
    <property type="entry name" value="MPN"/>
    <property type="match status" value="1"/>
</dbReference>
<dbReference type="PROSITE" id="PS01302">
    <property type="entry name" value="UPF0758"/>
    <property type="match status" value="1"/>
</dbReference>
<name>Y5095_CITK8</name>
<accession>A8ARM5</accession>
<protein>
    <recommendedName>
        <fullName evidence="1">UPF0758 protein CKO_05095</fullName>
    </recommendedName>
</protein>
<reference key="1">
    <citation type="submission" date="2007-08" db="EMBL/GenBank/DDBJ databases">
        <authorList>
            <consortium name="The Citrobacter koseri Genome Sequencing Project"/>
            <person name="McClelland M."/>
            <person name="Sanderson E.K."/>
            <person name="Porwollik S."/>
            <person name="Spieth J."/>
            <person name="Clifton W.S."/>
            <person name="Latreille P."/>
            <person name="Courtney L."/>
            <person name="Wang C."/>
            <person name="Pepin K."/>
            <person name="Bhonagiri V."/>
            <person name="Nash W."/>
            <person name="Johnson M."/>
            <person name="Thiruvilangam P."/>
            <person name="Wilson R."/>
        </authorList>
    </citation>
    <scope>NUCLEOTIDE SEQUENCE [LARGE SCALE GENOMIC DNA]</scope>
    <source>
        <strain>ATCC BAA-895 / CDC 4225-83 / SGSC4696</strain>
    </source>
</reference>
<keyword id="KW-0378">Hydrolase</keyword>
<keyword id="KW-0479">Metal-binding</keyword>
<keyword id="KW-0482">Metalloprotease</keyword>
<keyword id="KW-0645">Protease</keyword>
<keyword id="KW-1185">Reference proteome</keyword>
<keyword id="KW-0862">Zinc</keyword>